<proteinExistence type="inferred from homology"/>
<dbReference type="EC" id="2.1.1.177" evidence="1"/>
<dbReference type="EMBL" id="CP000058">
    <property type="protein sequence ID" value="AAZ33696.1"/>
    <property type="molecule type" value="Genomic_DNA"/>
</dbReference>
<dbReference type="RefSeq" id="WP_002555336.1">
    <property type="nucleotide sequence ID" value="NC_005773.3"/>
</dbReference>
<dbReference type="SMR" id="Q48DL7"/>
<dbReference type="GeneID" id="96220866"/>
<dbReference type="KEGG" id="psp:PSPPH_4408"/>
<dbReference type="eggNOG" id="COG1576">
    <property type="taxonomic scope" value="Bacteria"/>
</dbReference>
<dbReference type="HOGENOM" id="CLU_100552_1_0_6"/>
<dbReference type="Proteomes" id="UP000000551">
    <property type="component" value="Chromosome"/>
</dbReference>
<dbReference type="GO" id="GO:0005737">
    <property type="term" value="C:cytoplasm"/>
    <property type="evidence" value="ECO:0007669"/>
    <property type="project" value="UniProtKB-SubCell"/>
</dbReference>
<dbReference type="GO" id="GO:0070038">
    <property type="term" value="F:rRNA (pseudouridine-N3-)-methyltransferase activity"/>
    <property type="evidence" value="ECO:0007669"/>
    <property type="project" value="UniProtKB-UniRule"/>
</dbReference>
<dbReference type="CDD" id="cd18081">
    <property type="entry name" value="RlmH-like"/>
    <property type="match status" value="1"/>
</dbReference>
<dbReference type="Gene3D" id="3.40.1280.10">
    <property type="match status" value="1"/>
</dbReference>
<dbReference type="HAMAP" id="MF_00658">
    <property type="entry name" value="23SrRNA_methyltr_H"/>
    <property type="match status" value="1"/>
</dbReference>
<dbReference type="InterPro" id="IPR029028">
    <property type="entry name" value="Alpha/beta_knot_MTases"/>
</dbReference>
<dbReference type="InterPro" id="IPR003742">
    <property type="entry name" value="RlmH-like"/>
</dbReference>
<dbReference type="InterPro" id="IPR029026">
    <property type="entry name" value="tRNA_m1G_MTases_N"/>
</dbReference>
<dbReference type="NCBIfam" id="NF000986">
    <property type="entry name" value="PRK00103.1-4"/>
    <property type="match status" value="1"/>
</dbReference>
<dbReference type="NCBIfam" id="TIGR00246">
    <property type="entry name" value="tRNA_RlmH_YbeA"/>
    <property type="match status" value="1"/>
</dbReference>
<dbReference type="PANTHER" id="PTHR33603">
    <property type="entry name" value="METHYLTRANSFERASE"/>
    <property type="match status" value="1"/>
</dbReference>
<dbReference type="PANTHER" id="PTHR33603:SF1">
    <property type="entry name" value="RIBOSOMAL RNA LARGE SUBUNIT METHYLTRANSFERASE H"/>
    <property type="match status" value="1"/>
</dbReference>
<dbReference type="Pfam" id="PF02590">
    <property type="entry name" value="SPOUT_MTase"/>
    <property type="match status" value="1"/>
</dbReference>
<dbReference type="PIRSF" id="PIRSF004505">
    <property type="entry name" value="MT_bac"/>
    <property type="match status" value="1"/>
</dbReference>
<dbReference type="SUPFAM" id="SSF75217">
    <property type="entry name" value="alpha/beta knot"/>
    <property type="match status" value="1"/>
</dbReference>
<accession>Q48DL7</accession>
<keyword id="KW-0963">Cytoplasm</keyword>
<keyword id="KW-0489">Methyltransferase</keyword>
<keyword id="KW-0698">rRNA processing</keyword>
<keyword id="KW-0949">S-adenosyl-L-methionine</keyword>
<keyword id="KW-0808">Transferase</keyword>
<gene>
    <name evidence="1" type="primary">rlmH</name>
    <name type="ordered locus">PSPPH_4408</name>
</gene>
<comment type="function">
    <text evidence="1">Specifically methylates the pseudouridine at position 1915 (m3Psi1915) in 23S rRNA.</text>
</comment>
<comment type="catalytic activity">
    <reaction evidence="1">
        <text>pseudouridine(1915) in 23S rRNA + S-adenosyl-L-methionine = N(3)-methylpseudouridine(1915) in 23S rRNA + S-adenosyl-L-homocysteine + H(+)</text>
        <dbReference type="Rhea" id="RHEA:42752"/>
        <dbReference type="Rhea" id="RHEA-COMP:10221"/>
        <dbReference type="Rhea" id="RHEA-COMP:10222"/>
        <dbReference type="ChEBI" id="CHEBI:15378"/>
        <dbReference type="ChEBI" id="CHEBI:57856"/>
        <dbReference type="ChEBI" id="CHEBI:59789"/>
        <dbReference type="ChEBI" id="CHEBI:65314"/>
        <dbReference type="ChEBI" id="CHEBI:74486"/>
        <dbReference type="EC" id="2.1.1.177"/>
    </reaction>
</comment>
<comment type="subunit">
    <text evidence="1">Homodimer.</text>
</comment>
<comment type="subcellular location">
    <subcellularLocation>
        <location evidence="1">Cytoplasm</location>
    </subcellularLocation>
</comment>
<comment type="similarity">
    <text evidence="1">Belongs to the RNA methyltransferase RlmH family.</text>
</comment>
<feature type="chain" id="PRO_0000260587" description="Ribosomal RNA large subunit methyltransferase H">
    <location>
        <begin position="1"/>
        <end position="155"/>
    </location>
</feature>
<feature type="binding site" evidence="1">
    <location>
        <position position="73"/>
    </location>
    <ligand>
        <name>S-adenosyl-L-methionine</name>
        <dbReference type="ChEBI" id="CHEBI:59789"/>
    </ligand>
</feature>
<feature type="binding site" evidence="1">
    <location>
        <position position="104"/>
    </location>
    <ligand>
        <name>S-adenosyl-L-methionine</name>
        <dbReference type="ChEBI" id="CHEBI:59789"/>
    </ligand>
</feature>
<feature type="binding site" evidence="1">
    <location>
        <begin position="123"/>
        <end position="128"/>
    </location>
    <ligand>
        <name>S-adenosyl-L-methionine</name>
        <dbReference type="ChEBI" id="CHEBI:59789"/>
    </ligand>
</feature>
<name>RLMH_PSE14</name>
<evidence type="ECO:0000255" key="1">
    <source>
        <dbReference type="HAMAP-Rule" id="MF_00658"/>
    </source>
</evidence>
<organism>
    <name type="scientific">Pseudomonas savastanoi pv. phaseolicola (strain 1448A / Race 6)</name>
    <name type="common">Pseudomonas syringae pv. phaseolicola (strain 1448A / Race 6)</name>
    <dbReference type="NCBI Taxonomy" id="264730"/>
    <lineage>
        <taxon>Bacteria</taxon>
        <taxon>Pseudomonadati</taxon>
        <taxon>Pseudomonadota</taxon>
        <taxon>Gammaproteobacteria</taxon>
        <taxon>Pseudomonadales</taxon>
        <taxon>Pseudomonadaceae</taxon>
        <taxon>Pseudomonas</taxon>
    </lineage>
</organism>
<reference key="1">
    <citation type="journal article" date="2005" name="J. Bacteriol.">
        <title>Whole-genome sequence analysis of Pseudomonas syringae pv. phaseolicola 1448A reveals divergence among pathovars in genes involved in virulence and transposition.</title>
        <authorList>
            <person name="Joardar V."/>
            <person name="Lindeberg M."/>
            <person name="Jackson R.W."/>
            <person name="Selengut J."/>
            <person name="Dodson R."/>
            <person name="Brinkac L.M."/>
            <person name="Daugherty S.C."/>
            <person name="DeBoy R.T."/>
            <person name="Durkin A.S."/>
            <person name="Gwinn Giglio M."/>
            <person name="Madupu R."/>
            <person name="Nelson W.C."/>
            <person name="Rosovitz M.J."/>
            <person name="Sullivan S.A."/>
            <person name="Crabtree J."/>
            <person name="Creasy T."/>
            <person name="Davidsen T.M."/>
            <person name="Haft D.H."/>
            <person name="Zafar N."/>
            <person name="Zhou L."/>
            <person name="Halpin R."/>
            <person name="Holley T."/>
            <person name="Khouri H.M."/>
            <person name="Feldblyum T.V."/>
            <person name="White O."/>
            <person name="Fraser C.M."/>
            <person name="Chatterjee A.K."/>
            <person name="Cartinhour S."/>
            <person name="Schneider D."/>
            <person name="Mansfield J.W."/>
            <person name="Collmer A."/>
            <person name="Buell R."/>
        </authorList>
    </citation>
    <scope>NUCLEOTIDE SEQUENCE [LARGE SCALE GENOMIC DNA]</scope>
    <source>
        <strain>1448A / Race 6</strain>
    </source>
</reference>
<sequence>MRLRLIAVGSRMPKWVEEGWHEYAKRMPSELALELVEIPLNTRGKNADVARFIRQEGEAMLAKVQPGERIVTLEVHGKPWSTEQLAVELDRWRLDARTVNLMVGGPEGLAPEVCARSEQRWSLSPLTLPHPLVRILIGEQMYRAWTVLSGHPYHK</sequence>
<protein>
    <recommendedName>
        <fullName evidence="1">Ribosomal RNA large subunit methyltransferase H</fullName>
        <ecNumber evidence="1">2.1.1.177</ecNumber>
    </recommendedName>
    <alternativeName>
        <fullName evidence="1">23S rRNA (pseudouridine1915-N3)-methyltransferase</fullName>
    </alternativeName>
    <alternativeName>
        <fullName evidence="1">23S rRNA m3Psi1915 methyltransferase</fullName>
    </alternativeName>
    <alternativeName>
        <fullName evidence="1">rRNA (pseudouridine-N3-)-methyltransferase RlmH</fullName>
    </alternativeName>
</protein>